<sequence>MITESRQMLDKRNRPLRDLRISVTDRCNFRCTYCMPAELFGPDYPFLKKEELLSFEELERLATLFVTRFGVEKIRLTGGEPLMRKDMPELIKKLARIPGIRDIAMTTNGSLLPVYAKRLKEAGLKRVTISLDSLEDERFKKINGRGVSVSKVLEGIEAAKQAGLGVKINMVVQKGVNEKDILPMARYFKEKGHILRFIEFMDVGNTNQWEKKDVMTKAEIIDLINKHMPVEPIAPNYIGEVASRFRYLDGSGEIGVISSVSDAFCGSCNRARLSARGELFTCLFASSGFDLRAPVRQELSDDELSEMIGTVWKNRIDQYSVDRTLSKASGKKKVEMSYIGG</sequence>
<accession>P39757</accession>
<dbReference type="EC" id="4.1.99.22" evidence="1"/>
<dbReference type="EMBL" id="Z35277">
    <property type="protein sequence ID" value="CAA84540.1"/>
    <property type="molecule type" value="Genomic_DNA"/>
</dbReference>
<dbReference type="EMBL" id="Z81356">
    <property type="protein sequence ID" value="CAB03683.1"/>
    <property type="molecule type" value="Genomic_DNA"/>
</dbReference>
<dbReference type="EMBL" id="AL009126">
    <property type="protein sequence ID" value="CAB15687.1"/>
    <property type="molecule type" value="Genomic_DNA"/>
</dbReference>
<dbReference type="PIR" id="D69664">
    <property type="entry name" value="D69664"/>
</dbReference>
<dbReference type="RefSeq" id="NP_391551.1">
    <property type="nucleotide sequence ID" value="NC_000964.3"/>
</dbReference>
<dbReference type="RefSeq" id="WP_003243488.1">
    <property type="nucleotide sequence ID" value="NZ_OZ025638.1"/>
</dbReference>
<dbReference type="SMR" id="P39757"/>
<dbReference type="FunCoup" id="P39757">
    <property type="interactions" value="736"/>
</dbReference>
<dbReference type="STRING" id="224308.BSU36700"/>
<dbReference type="PaxDb" id="224308-BSU36700"/>
<dbReference type="EnsemblBacteria" id="CAB15687">
    <property type="protein sequence ID" value="CAB15687"/>
    <property type="gene ID" value="BSU_36700"/>
</dbReference>
<dbReference type="GeneID" id="936982"/>
<dbReference type="KEGG" id="bsu:BSU36700"/>
<dbReference type="PATRIC" id="fig|224308.179.peg.3973"/>
<dbReference type="eggNOG" id="COG2896">
    <property type="taxonomic scope" value="Bacteria"/>
</dbReference>
<dbReference type="InParanoid" id="P39757"/>
<dbReference type="OrthoDB" id="9763993at2"/>
<dbReference type="PhylomeDB" id="P39757"/>
<dbReference type="BioCyc" id="BSUB:BSU36700-MONOMER"/>
<dbReference type="UniPathway" id="UPA00344"/>
<dbReference type="Proteomes" id="UP000001570">
    <property type="component" value="Chromosome"/>
</dbReference>
<dbReference type="GO" id="GO:0051539">
    <property type="term" value="F:4 iron, 4 sulfur cluster binding"/>
    <property type="evidence" value="ECO:0007669"/>
    <property type="project" value="UniProtKB-UniRule"/>
</dbReference>
<dbReference type="GO" id="GO:0061799">
    <property type="term" value="F:cyclic pyranopterin monophosphate synthase activity"/>
    <property type="evidence" value="ECO:0000318"/>
    <property type="project" value="GO_Central"/>
</dbReference>
<dbReference type="GO" id="GO:0061798">
    <property type="term" value="F:GTP 3',8'-cyclase activity"/>
    <property type="evidence" value="ECO:0000318"/>
    <property type="project" value="GO_Central"/>
</dbReference>
<dbReference type="GO" id="GO:0005525">
    <property type="term" value="F:GTP binding"/>
    <property type="evidence" value="ECO:0007669"/>
    <property type="project" value="UniProtKB-UniRule"/>
</dbReference>
<dbReference type="GO" id="GO:0046872">
    <property type="term" value="F:metal ion binding"/>
    <property type="evidence" value="ECO:0007669"/>
    <property type="project" value="UniProtKB-KW"/>
</dbReference>
<dbReference type="GO" id="GO:1904047">
    <property type="term" value="F:S-adenosyl-L-methionine binding"/>
    <property type="evidence" value="ECO:0007669"/>
    <property type="project" value="UniProtKB-UniRule"/>
</dbReference>
<dbReference type="GO" id="GO:0006777">
    <property type="term" value="P:Mo-molybdopterin cofactor biosynthetic process"/>
    <property type="evidence" value="ECO:0000318"/>
    <property type="project" value="GO_Central"/>
</dbReference>
<dbReference type="CDD" id="cd01335">
    <property type="entry name" value="Radical_SAM"/>
    <property type="match status" value="1"/>
</dbReference>
<dbReference type="CDD" id="cd21117">
    <property type="entry name" value="Twitch_MoaA"/>
    <property type="match status" value="1"/>
</dbReference>
<dbReference type="Gene3D" id="3.20.20.70">
    <property type="entry name" value="Aldolase class I"/>
    <property type="match status" value="1"/>
</dbReference>
<dbReference type="HAMAP" id="MF_01225_B">
    <property type="entry name" value="MoaA_B"/>
    <property type="match status" value="1"/>
</dbReference>
<dbReference type="InterPro" id="IPR013785">
    <property type="entry name" value="Aldolase_TIM"/>
</dbReference>
<dbReference type="InterPro" id="IPR006638">
    <property type="entry name" value="Elp3/MiaA/NifB-like_rSAM"/>
</dbReference>
<dbReference type="InterPro" id="IPR013483">
    <property type="entry name" value="MoaA"/>
</dbReference>
<dbReference type="InterPro" id="IPR000385">
    <property type="entry name" value="MoaA_NifB_PqqE_Fe-S-bd_CS"/>
</dbReference>
<dbReference type="InterPro" id="IPR010505">
    <property type="entry name" value="MoaA_twitch"/>
</dbReference>
<dbReference type="InterPro" id="IPR050105">
    <property type="entry name" value="MoCo_biosynth_MoaA/MoaC"/>
</dbReference>
<dbReference type="InterPro" id="IPR007197">
    <property type="entry name" value="rSAM"/>
</dbReference>
<dbReference type="NCBIfam" id="TIGR02666">
    <property type="entry name" value="moaA"/>
    <property type="match status" value="1"/>
</dbReference>
<dbReference type="PANTHER" id="PTHR22960:SF0">
    <property type="entry name" value="MOLYBDENUM COFACTOR BIOSYNTHESIS PROTEIN 1"/>
    <property type="match status" value="1"/>
</dbReference>
<dbReference type="PANTHER" id="PTHR22960">
    <property type="entry name" value="MOLYBDOPTERIN COFACTOR SYNTHESIS PROTEIN A"/>
    <property type="match status" value="1"/>
</dbReference>
<dbReference type="Pfam" id="PF06463">
    <property type="entry name" value="Mob_synth_C"/>
    <property type="match status" value="1"/>
</dbReference>
<dbReference type="Pfam" id="PF04055">
    <property type="entry name" value="Radical_SAM"/>
    <property type="match status" value="1"/>
</dbReference>
<dbReference type="SFLD" id="SFLDG01383">
    <property type="entry name" value="cyclic_pyranopterin_phosphate"/>
    <property type="match status" value="1"/>
</dbReference>
<dbReference type="SFLD" id="SFLDG01072">
    <property type="entry name" value="dehydrogenase_like"/>
    <property type="match status" value="1"/>
</dbReference>
<dbReference type="SMART" id="SM00729">
    <property type="entry name" value="Elp3"/>
    <property type="match status" value="1"/>
</dbReference>
<dbReference type="SUPFAM" id="SSF102114">
    <property type="entry name" value="Radical SAM enzymes"/>
    <property type="match status" value="1"/>
</dbReference>
<dbReference type="PROSITE" id="PS01305">
    <property type="entry name" value="MOAA_NIFB_PQQE"/>
    <property type="match status" value="1"/>
</dbReference>
<dbReference type="PROSITE" id="PS51918">
    <property type="entry name" value="RADICAL_SAM"/>
    <property type="match status" value="1"/>
</dbReference>
<proteinExistence type="inferred from homology"/>
<evidence type="ECO:0000255" key="1">
    <source>
        <dbReference type="HAMAP-Rule" id="MF_01225"/>
    </source>
</evidence>
<evidence type="ECO:0000255" key="2">
    <source>
        <dbReference type="PROSITE-ProRule" id="PRU01266"/>
    </source>
</evidence>
<organism>
    <name type="scientific">Bacillus subtilis (strain 168)</name>
    <dbReference type="NCBI Taxonomy" id="224308"/>
    <lineage>
        <taxon>Bacteria</taxon>
        <taxon>Bacillati</taxon>
        <taxon>Bacillota</taxon>
        <taxon>Bacilli</taxon>
        <taxon>Bacillales</taxon>
        <taxon>Bacillaceae</taxon>
        <taxon>Bacillus</taxon>
    </lineage>
</organism>
<protein>
    <recommendedName>
        <fullName evidence="1">GTP 3',8-cyclase</fullName>
        <ecNumber evidence="1">4.1.99.22</ecNumber>
    </recommendedName>
    <alternativeName>
        <fullName evidence="1">Molybdenum cofactor biosynthesis protein A</fullName>
    </alternativeName>
</protein>
<feature type="chain" id="PRO_0000152949" description="GTP 3',8-cyclase">
    <location>
        <begin position="1"/>
        <end position="341"/>
    </location>
</feature>
<feature type="domain" description="Radical SAM core" evidence="2">
    <location>
        <begin position="11"/>
        <end position="231"/>
    </location>
</feature>
<feature type="binding site" evidence="1">
    <location>
        <position position="20"/>
    </location>
    <ligand>
        <name>GTP</name>
        <dbReference type="ChEBI" id="CHEBI:37565"/>
    </ligand>
</feature>
<feature type="binding site" evidence="1">
    <location>
        <position position="27"/>
    </location>
    <ligand>
        <name>[4Fe-4S] cluster</name>
        <dbReference type="ChEBI" id="CHEBI:49883"/>
        <label>1</label>
        <note>4Fe-4S-S-AdoMet</note>
    </ligand>
</feature>
<feature type="binding site" evidence="1">
    <location>
        <position position="31"/>
    </location>
    <ligand>
        <name>[4Fe-4S] cluster</name>
        <dbReference type="ChEBI" id="CHEBI:49883"/>
        <label>1</label>
        <note>4Fe-4S-S-AdoMet</note>
    </ligand>
</feature>
<feature type="binding site" evidence="1">
    <location>
        <position position="33"/>
    </location>
    <ligand>
        <name>S-adenosyl-L-methionine</name>
        <dbReference type="ChEBI" id="CHEBI:59789"/>
    </ligand>
</feature>
<feature type="binding site" evidence="1">
    <location>
        <position position="34"/>
    </location>
    <ligand>
        <name>[4Fe-4S] cluster</name>
        <dbReference type="ChEBI" id="CHEBI:49883"/>
        <label>1</label>
        <note>4Fe-4S-S-AdoMet</note>
    </ligand>
</feature>
<feature type="binding site" evidence="1">
    <location>
        <position position="75"/>
    </location>
    <ligand>
        <name>GTP</name>
        <dbReference type="ChEBI" id="CHEBI:37565"/>
    </ligand>
</feature>
<feature type="binding site" evidence="1">
    <location>
        <position position="79"/>
    </location>
    <ligand>
        <name>S-adenosyl-L-methionine</name>
        <dbReference type="ChEBI" id="CHEBI:59789"/>
    </ligand>
</feature>
<feature type="binding site" evidence="1">
    <location>
        <position position="106"/>
    </location>
    <ligand>
        <name>GTP</name>
        <dbReference type="ChEBI" id="CHEBI:37565"/>
    </ligand>
</feature>
<feature type="binding site" evidence="1">
    <location>
        <position position="130"/>
    </location>
    <ligand>
        <name>S-adenosyl-L-methionine</name>
        <dbReference type="ChEBI" id="CHEBI:59789"/>
    </ligand>
</feature>
<feature type="binding site" evidence="1">
    <location>
        <position position="167"/>
    </location>
    <ligand>
        <name>GTP</name>
        <dbReference type="ChEBI" id="CHEBI:37565"/>
    </ligand>
</feature>
<feature type="binding site" evidence="1">
    <location>
        <position position="201"/>
    </location>
    <ligand>
        <name>S-adenosyl-L-methionine</name>
        <dbReference type="ChEBI" id="CHEBI:59789"/>
    </ligand>
</feature>
<feature type="binding site" evidence="1">
    <location>
        <position position="265"/>
    </location>
    <ligand>
        <name>[4Fe-4S] cluster</name>
        <dbReference type="ChEBI" id="CHEBI:49883"/>
        <label>2</label>
        <note>4Fe-4S-substrate</note>
    </ligand>
</feature>
<feature type="binding site" evidence="1">
    <location>
        <position position="268"/>
    </location>
    <ligand>
        <name>[4Fe-4S] cluster</name>
        <dbReference type="ChEBI" id="CHEBI:49883"/>
        <label>2</label>
        <note>4Fe-4S-substrate</note>
    </ligand>
</feature>
<feature type="binding site" evidence="1">
    <location>
        <begin position="270"/>
        <end position="272"/>
    </location>
    <ligand>
        <name>GTP</name>
        <dbReference type="ChEBI" id="CHEBI:37565"/>
    </ligand>
</feature>
<feature type="binding site" evidence="1">
    <location>
        <position position="282"/>
    </location>
    <ligand>
        <name>[4Fe-4S] cluster</name>
        <dbReference type="ChEBI" id="CHEBI:49883"/>
        <label>2</label>
        <note>4Fe-4S-substrate</note>
    </ligand>
</feature>
<name>MOAA_BACSU</name>
<reference key="1">
    <citation type="journal article" date="1995" name="J. Bacteriol.">
        <title>Identification and isolation of a gene required for nitrate assimilation and anaerobic growth of Bacillus subtilis.</title>
        <authorList>
            <person name="Glaser P."/>
            <person name="Danchin A."/>
            <person name="Kunst F."/>
            <person name="Zuber P."/>
            <person name="Nakano M.M."/>
        </authorList>
    </citation>
    <scope>NUCLEOTIDE SEQUENCE [GENOMIC DNA]</scope>
    <source>
        <strain>168</strain>
    </source>
</reference>
<reference key="2">
    <citation type="submission" date="1996-10" db="EMBL/GenBank/DDBJ databases">
        <authorList>
            <person name="Glaser P."/>
            <person name="Danchin A."/>
            <person name="Kunst F."/>
            <person name="Moszer I."/>
        </authorList>
    </citation>
    <scope>NUCLEOTIDE SEQUENCE [GENOMIC DNA]</scope>
    <source>
        <strain>168</strain>
    </source>
</reference>
<reference key="3">
    <citation type="journal article" date="1997" name="Nature">
        <title>The complete genome sequence of the Gram-positive bacterium Bacillus subtilis.</title>
        <authorList>
            <person name="Kunst F."/>
            <person name="Ogasawara N."/>
            <person name="Moszer I."/>
            <person name="Albertini A.M."/>
            <person name="Alloni G."/>
            <person name="Azevedo V."/>
            <person name="Bertero M.G."/>
            <person name="Bessieres P."/>
            <person name="Bolotin A."/>
            <person name="Borchert S."/>
            <person name="Borriss R."/>
            <person name="Boursier L."/>
            <person name="Brans A."/>
            <person name="Braun M."/>
            <person name="Brignell S.C."/>
            <person name="Bron S."/>
            <person name="Brouillet S."/>
            <person name="Bruschi C.V."/>
            <person name="Caldwell B."/>
            <person name="Capuano V."/>
            <person name="Carter N.M."/>
            <person name="Choi S.-K."/>
            <person name="Codani J.-J."/>
            <person name="Connerton I.F."/>
            <person name="Cummings N.J."/>
            <person name="Daniel R.A."/>
            <person name="Denizot F."/>
            <person name="Devine K.M."/>
            <person name="Duesterhoeft A."/>
            <person name="Ehrlich S.D."/>
            <person name="Emmerson P.T."/>
            <person name="Entian K.-D."/>
            <person name="Errington J."/>
            <person name="Fabret C."/>
            <person name="Ferrari E."/>
            <person name="Foulger D."/>
            <person name="Fritz C."/>
            <person name="Fujita M."/>
            <person name="Fujita Y."/>
            <person name="Fuma S."/>
            <person name="Galizzi A."/>
            <person name="Galleron N."/>
            <person name="Ghim S.-Y."/>
            <person name="Glaser P."/>
            <person name="Goffeau A."/>
            <person name="Golightly E.J."/>
            <person name="Grandi G."/>
            <person name="Guiseppi G."/>
            <person name="Guy B.J."/>
            <person name="Haga K."/>
            <person name="Haiech J."/>
            <person name="Harwood C.R."/>
            <person name="Henaut A."/>
            <person name="Hilbert H."/>
            <person name="Holsappel S."/>
            <person name="Hosono S."/>
            <person name="Hullo M.-F."/>
            <person name="Itaya M."/>
            <person name="Jones L.-M."/>
            <person name="Joris B."/>
            <person name="Karamata D."/>
            <person name="Kasahara Y."/>
            <person name="Klaerr-Blanchard M."/>
            <person name="Klein C."/>
            <person name="Kobayashi Y."/>
            <person name="Koetter P."/>
            <person name="Koningstein G."/>
            <person name="Krogh S."/>
            <person name="Kumano M."/>
            <person name="Kurita K."/>
            <person name="Lapidus A."/>
            <person name="Lardinois S."/>
            <person name="Lauber J."/>
            <person name="Lazarevic V."/>
            <person name="Lee S.-M."/>
            <person name="Levine A."/>
            <person name="Liu H."/>
            <person name="Masuda S."/>
            <person name="Mauel C."/>
            <person name="Medigue C."/>
            <person name="Medina N."/>
            <person name="Mellado R.P."/>
            <person name="Mizuno M."/>
            <person name="Moestl D."/>
            <person name="Nakai S."/>
            <person name="Noback M."/>
            <person name="Noone D."/>
            <person name="O'Reilly M."/>
            <person name="Ogawa K."/>
            <person name="Ogiwara A."/>
            <person name="Oudega B."/>
            <person name="Park S.-H."/>
            <person name="Parro V."/>
            <person name="Pohl T.M."/>
            <person name="Portetelle D."/>
            <person name="Porwollik S."/>
            <person name="Prescott A.M."/>
            <person name="Presecan E."/>
            <person name="Pujic P."/>
            <person name="Purnelle B."/>
            <person name="Rapoport G."/>
            <person name="Rey M."/>
            <person name="Reynolds S."/>
            <person name="Rieger M."/>
            <person name="Rivolta C."/>
            <person name="Rocha E."/>
            <person name="Roche B."/>
            <person name="Rose M."/>
            <person name="Sadaie Y."/>
            <person name="Sato T."/>
            <person name="Scanlan E."/>
            <person name="Schleich S."/>
            <person name="Schroeter R."/>
            <person name="Scoffone F."/>
            <person name="Sekiguchi J."/>
            <person name="Sekowska A."/>
            <person name="Seror S.J."/>
            <person name="Serror P."/>
            <person name="Shin B.-S."/>
            <person name="Soldo B."/>
            <person name="Sorokin A."/>
            <person name="Tacconi E."/>
            <person name="Takagi T."/>
            <person name="Takahashi H."/>
            <person name="Takemaru K."/>
            <person name="Takeuchi M."/>
            <person name="Tamakoshi A."/>
            <person name="Tanaka T."/>
            <person name="Terpstra P."/>
            <person name="Tognoni A."/>
            <person name="Tosato V."/>
            <person name="Uchiyama S."/>
            <person name="Vandenbol M."/>
            <person name="Vannier F."/>
            <person name="Vassarotti A."/>
            <person name="Viari A."/>
            <person name="Wambutt R."/>
            <person name="Wedler E."/>
            <person name="Wedler H."/>
            <person name="Weitzenegger T."/>
            <person name="Winters P."/>
            <person name="Wipat A."/>
            <person name="Yamamoto H."/>
            <person name="Yamane K."/>
            <person name="Yasumoto K."/>
            <person name="Yata K."/>
            <person name="Yoshida K."/>
            <person name="Yoshikawa H.-F."/>
            <person name="Zumstein E."/>
            <person name="Yoshikawa H."/>
            <person name="Danchin A."/>
        </authorList>
    </citation>
    <scope>NUCLEOTIDE SEQUENCE [LARGE SCALE GENOMIC DNA]</scope>
    <source>
        <strain>168</strain>
    </source>
</reference>
<comment type="function">
    <text evidence="1">Catalyzes the cyclization of GTP to (8S)-3',8-cyclo-7,8-dihydroguanosine 5'-triphosphate (By similarity). Required for both nitrate assimilation and respiration.</text>
</comment>
<comment type="catalytic activity">
    <reaction evidence="1">
        <text>GTP + AH2 + S-adenosyl-L-methionine = (8S)-3',8-cyclo-7,8-dihydroguanosine 5'-triphosphate + 5'-deoxyadenosine + L-methionine + A + H(+)</text>
        <dbReference type="Rhea" id="RHEA:49576"/>
        <dbReference type="ChEBI" id="CHEBI:13193"/>
        <dbReference type="ChEBI" id="CHEBI:15378"/>
        <dbReference type="ChEBI" id="CHEBI:17319"/>
        <dbReference type="ChEBI" id="CHEBI:17499"/>
        <dbReference type="ChEBI" id="CHEBI:37565"/>
        <dbReference type="ChEBI" id="CHEBI:57844"/>
        <dbReference type="ChEBI" id="CHEBI:59789"/>
        <dbReference type="ChEBI" id="CHEBI:131766"/>
        <dbReference type="EC" id="4.1.99.22"/>
    </reaction>
</comment>
<comment type="cofactor">
    <cofactor evidence="1">
        <name>[4Fe-4S] cluster</name>
        <dbReference type="ChEBI" id="CHEBI:49883"/>
    </cofactor>
    <text evidence="1">Binds 2 [4Fe-4S] clusters. Binds 1 [4Fe-4S] cluster coordinated with 3 cysteines and an exchangeable S-adenosyl-L-methionine and 1 [4Fe-4S] cluster coordinated with 3 cysteines and the GTP-derived substrate.</text>
</comment>
<comment type="pathway">
    <text evidence="1">Cofactor biosynthesis; molybdopterin biosynthesis.</text>
</comment>
<comment type="subunit">
    <text evidence="1">Monomer and homodimer.</text>
</comment>
<comment type="similarity">
    <text evidence="1">Belongs to the radical SAM superfamily. MoaA family.</text>
</comment>
<keyword id="KW-0004">4Fe-4S</keyword>
<keyword id="KW-0342">GTP-binding</keyword>
<keyword id="KW-0408">Iron</keyword>
<keyword id="KW-0411">Iron-sulfur</keyword>
<keyword id="KW-0456">Lyase</keyword>
<keyword id="KW-0479">Metal-binding</keyword>
<keyword id="KW-0501">Molybdenum cofactor biosynthesis</keyword>
<keyword id="KW-0547">Nucleotide-binding</keyword>
<keyword id="KW-1185">Reference proteome</keyword>
<keyword id="KW-0949">S-adenosyl-L-methionine</keyword>
<gene>
    <name evidence="1" type="primary">moaA</name>
    <name type="synonym">narA</name>
    <name type="synonym">narAB</name>
    <name type="ordered locus">BSU36700</name>
</gene>